<organism>
    <name type="scientific">Solanum tuberosum</name>
    <name type="common">Potato</name>
    <dbReference type="NCBI Taxonomy" id="4113"/>
    <lineage>
        <taxon>Eukaryota</taxon>
        <taxon>Viridiplantae</taxon>
        <taxon>Streptophyta</taxon>
        <taxon>Embryophyta</taxon>
        <taxon>Tracheophyta</taxon>
        <taxon>Spermatophyta</taxon>
        <taxon>Magnoliopsida</taxon>
        <taxon>eudicotyledons</taxon>
        <taxon>Gunneridae</taxon>
        <taxon>Pentapetalae</taxon>
        <taxon>asterids</taxon>
        <taxon>lamiids</taxon>
        <taxon>Solanales</taxon>
        <taxon>Solanaceae</taxon>
        <taxon>Solanoideae</taxon>
        <taxon>Solaneae</taxon>
        <taxon>Solanum</taxon>
    </lineage>
</organism>
<evidence type="ECO:0000255" key="1">
    <source>
        <dbReference type="HAMAP-Rule" id="MF_01393"/>
    </source>
</evidence>
<sequence length="247" mass="27003">MNVLSCSINTLKGLYDISGVEVGQHFYWQIGGFQVHGQVLITSWVVIAILLGSATIAVRNPQTIPTGGQNFFEYVLEFIRDVSKTQIGEEYGPWVPFIGTMFLFIFVSNWSGALLPWKIIQLPHGELAAPTNDINTTVALALLTSVAYFYAGLTKKGLGYFGKYIQPTPILLPINILEDFTKPLSLSFRLFGNILADELVVVVLVSLVPLVVPIPVMLLGLFTSGIQALIFATLAAAYIGESMEGHH</sequence>
<proteinExistence type="inferred from homology"/>
<dbReference type="EMBL" id="DQ231562">
    <property type="protein sequence ID" value="ABB90031.1"/>
    <property type="molecule type" value="Genomic_DNA"/>
</dbReference>
<dbReference type="EMBL" id="DQ386163">
    <property type="protein sequence ID" value="ABD47045.1"/>
    <property type="molecule type" value="Genomic_DNA"/>
</dbReference>
<dbReference type="RefSeq" id="YP_635627.1">
    <property type="nucleotide sequence ID" value="NC_008096.2"/>
</dbReference>
<dbReference type="SMR" id="Q2VEI8"/>
<dbReference type="FunCoup" id="Q2VEI8">
    <property type="interactions" value="138"/>
</dbReference>
<dbReference type="STRING" id="4113.Q2VEI8"/>
<dbReference type="GeneID" id="4099857"/>
<dbReference type="KEGG" id="sot:4099857"/>
<dbReference type="InParanoid" id="Q2VEI8"/>
<dbReference type="OrthoDB" id="2303at2759"/>
<dbReference type="Proteomes" id="UP000011115">
    <property type="component" value="Unassembled WGS sequence"/>
</dbReference>
<dbReference type="GO" id="GO:0009535">
    <property type="term" value="C:chloroplast thylakoid membrane"/>
    <property type="evidence" value="ECO:0007669"/>
    <property type="project" value="UniProtKB-SubCell"/>
</dbReference>
<dbReference type="GO" id="GO:0005886">
    <property type="term" value="C:plasma membrane"/>
    <property type="evidence" value="ECO:0007669"/>
    <property type="project" value="UniProtKB-UniRule"/>
</dbReference>
<dbReference type="GO" id="GO:0045259">
    <property type="term" value="C:proton-transporting ATP synthase complex"/>
    <property type="evidence" value="ECO:0007669"/>
    <property type="project" value="UniProtKB-KW"/>
</dbReference>
<dbReference type="GO" id="GO:0046933">
    <property type="term" value="F:proton-transporting ATP synthase activity, rotational mechanism"/>
    <property type="evidence" value="ECO:0007669"/>
    <property type="project" value="UniProtKB-UniRule"/>
</dbReference>
<dbReference type="CDD" id="cd00310">
    <property type="entry name" value="ATP-synt_Fo_a_6"/>
    <property type="match status" value="1"/>
</dbReference>
<dbReference type="FunFam" id="1.20.120.220:FF:000001">
    <property type="entry name" value="ATP synthase subunit a, chloroplastic"/>
    <property type="match status" value="1"/>
</dbReference>
<dbReference type="Gene3D" id="1.20.120.220">
    <property type="entry name" value="ATP synthase, F0 complex, subunit A"/>
    <property type="match status" value="1"/>
</dbReference>
<dbReference type="HAMAP" id="MF_01393">
    <property type="entry name" value="ATP_synth_a_bact"/>
    <property type="match status" value="1"/>
</dbReference>
<dbReference type="InterPro" id="IPR045082">
    <property type="entry name" value="ATP_syn_F0_a_bact/chloroplast"/>
</dbReference>
<dbReference type="InterPro" id="IPR000568">
    <property type="entry name" value="ATP_synth_F0_asu"/>
</dbReference>
<dbReference type="InterPro" id="IPR023011">
    <property type="entry name" value="ATP_synth_F0_asu_AS"/>
</dbReference>
<dbReference type="InterPro" id="IPR035908">
    <property type="entry name" value="F0_ATP_A_sf"/>
</dbReference>
<dbReference type="NCBIfam" id="TIGR01131">
    <property type="entry name" value="ATP_synt_6_or_A"/>
    <property type="match status" value="1"/>
</dbReference>
<dbReference type="PANTHER" id="PTHR42823">
    <property type="entry name" value="ATP SYNTHASE SUBUNIT A, CHLOROPLASTIC"/>
    <property type="match status" value="1"/>
</dbReference>
<dbReference type="PANTHER" id="PTHR42823:SF3">
    <property type="entry name" value="ATP SYNTHASE SUBUNIT A, CHLOROPLASTIC"/>
    <property type="match status" value="1"/>
</dbReference>
<dbReference type="Pfam" id="PF00119">
    <property type="entry name" value="ATP-synt_A"/>
    <property type="match status" value="1"/>
</dbReference>
<dbReference type="PRINTS" id="PR00123">
    <property type="entry name" value="ATPASEA"/>
</dbReference>
<dbReference type="SUPFAM" id="SSF81336">
    <property type="entry name" value="F1F0 ATP synthase subunit A"/>
    <property type="match status" value="1"/>
</dbReference>
<dbReference type="PROSITE" id="PS00449">
    <property type="entry name" value="ATPASE_A"/>
    <property type="match status" value="1"/>
</dbReference>
<accession>Q2VEI8</accession>
<name>ATPI_SOLTU</name>
<geneLocation type="chloroplast"/>
<comment type="function">
    <text evidence="1">Key component of the proton channel; it plays a direct role in the translocation of protons across the membrane.</text>
</comment>
<comment type="subunit">
    <text evidence="1">F-type ATPases have 2 components, CF(1) - the catalytic core - and CF(0) - the membrane proton channel. CF(1) has five subunits: alpha(3), beta(3), gamma(1), delta(1), epsilon(1). CF(0) has four main subunits: a, b, b' and c.</text>
</comment>
<comment type="subcellular location">
    <subcellularLocation>
        <location evidence="1">Plastid</location>
        <location evidence="1">Chloroplast thylakoid membrane</location>
        <topology evidence="1">Multi-pass membrane protein</topology>
    </subcellularLocation>
</comment>
<comment type="similarity">
    <text evidence="1">Belongs to the ATPase A chain family.</text>
</comment>
<keyword id="KW-0066">ATP synthesis</keyword>
<keyword id="KW-0138">CF(0)</keyword>
<keyword id="KW-0150">Chloroplast</keyword>
<keyword id="KW-0375">Hydrogen ion transport</keyword>
<keyword id="KW-0406">Ion transport</keyword>
<keyword id="KW-0472">Membrane</keyword>
<keyword id="KW-0934">Plastid</keyword>
<keyword id="KW-1185">Reference proteome</keyword>
<keyword id="KW-0793">Thylakoid</keyword>
<keyword id="KW-0812">Transmembrane</keyword>
<keyword id="KW-1133">Transmembrane helix</keyword>
<keyword id="KW-0813">Transport</keyword>
<protein>
    <recommendedName>
        <fullName evidence="1">ATP synthase subunit a, chloroplastic</fullName>
    </recommendedName>
    <alternativeName>
        <fullName evidence="1">ATP synthase F0 sector subunit a</fullName>
    </alternativeName>
    <alternativeName>
        <fullName evidence="1">F-ATPase subunit IV</fullName>
    </alternativeName>
</protein>
<reference key="1">
    <citation type="journal article" date="2006" name="Plant Cell Rep.">
        <title>The complete chloroplast genome sequences of Solanum tuberosum and comparative analysis with Solanaceae species identified the presence of a 241-bp deletion in cultivated potato chloroplast DNA sequence.</title>
        <authorList>
            <person name="Chung H.-J."/>
            <person name="Jung J.D."/>
            <person name="Park H.-W."/>
            <person name="Kim J.-H."/>
            <person name="Cha H.W."/>
            <person name="Min S.R."/>
            <person name="Jeong W.-J."/>
            <person name="Liu J.R."/>
        </authorList>
    </citation>
    <scope>NUCLEOTIDE SEQUENCE [LARGE SCALE GENOMIC DNA]</scope>
    <source>
        <strain>cv. Desiree</strain>
    </source>
</reference>
<reference key="2">
    <citation type="submission" date="2006-02" db="EMBL/GenBank/DDBJ databases">
        <title>Complete chloroplast genome sequences of Solanum tuberosum cultivar Desiree and comparative analyses with other Solanaceae genomes.</title>
        <authorList>
            <person name="Gargano D."/>
            <person name="Scotti N."/>
            <person name="Vezzi A."/>
            <person name="Bilardi A."/>
            <person name="Valle G."/>
            <person name="Grillo S."/>
            <person name="Cardi T."/>
        </authorList>
    </citation>
    <scope>NUCLEOTIDE SEQUENCE [LARGE SCALE GENOMIC DNA]</scope>
    <source>
        <strain>cv. Desiree</strain>
    </source>
</reference>
<feature type="chain" id="PRO_0000277568" description="ATP synthase subunit a, chloroplastic">
    <location>
        <begin position="1"/>
        <end position="247"/>
    </location>
</feature>
<feature type="transmembrane region" description="Helical" evidence="1">
    <location>
        <begin position="38"/>
        <end position="58"/>
    </location>
</feature>
<feature type="transmembrane region" description="Helical" evidence="1">
    <location>
        <begin position="95"/>
        <end position="115"/>
    </location>
</feature>
<feature type="transmembrane region" description="Helical" evidence="1">
    <location>
        <begin position="134"/>
        <end position="154"/>
    </location>
</feature>
<feature type="transmembrane region" description="Helical" evidence="1">
    <location>
        <begin position="199"/>
        <end position="219"/>
    </location>
</feature>
<feature type="transmembrane region" description="Helical" evidence="1">
    <location>
        <begin position="220"/>
        <end position="240"/>
    </location>
</feature>
<gene>
    <name evidence="1" type="primary">atpI</name>
</gene>